<dbReference type="EC" id="2.7.7.56" evidence="1"/>
<dbReference type="EMBL" id="CP001068">
    <property type="protein sequence ID" value="ACD27414.1"/>
    <property type="molecule type" value="Genomic_DNA"/>
</dbReference>
<dbReference type="SMR" id="B2U8D8"/>
<dbReference type="STRING" id="402626.Rpic_2280"/>
<dbReference type="KEGG" id="rpi:Rpic_2280"/>
<dbReference type="eggNOG" id="COG0689">
    <property type="taxonomic scope" value="Bacteria"/>
</dbReference>
<dbReference type="HOGENOM" id="CLU_050858_0_0_4"/>
<dbReference type="GO" id="GO:0000175">
    <property type="term" value="F:3'-5'-RNA exonuclease activity"/>
    <property type="evidence" value="ECO:0007669"/>
    <property type="project" value="UniProtKB-UniRule"/>
</dbReference>
<dbReference type="GO" id="GO:0000049">
    <property type="term" value="F:tRNA binding"/>
    <property type="evidence" value="ECO:0007669"/>
    <property type="project" value="UniProtKB-UniRule"/>
</dbReference>
<dbReference type="GO" id="GO:0009022">
    <property type="term" value="F:tRNA nucleotidyltransferase activity"/>
    <property type="evidence" value="ECO:0007669"/>
    <property type="project" value="UniProtKB-UniRule"/>
</dbReference>
<dbReference type="GO" id="GO:0016075">
    <property type="term" value="P:rRNA catabolic process"/>
    <property type="evidence" value="ECO:0007669"/>
    <property type="project" value="UniProtKB-UniRule"/>
</dbReference>
<dbReference type="GO" id="GO:0006364">
    <property type="term" value="P:rRNA processing"/>
    <property type="evidence" value="ECO:0007669"/>
    <property type="project" value="UniProtKB-KW"/>
</dbReference>
<dbReference type="GO" id="GO:0008033">
    <property type="term" value="P:tRNA processing"/>
    <property type="evidence" value="ECO:0007669"/>
    <property type="project" value="UniProtKB-UniRule"/>
</dbReference>
<dbReference type="CDD" id="cd11362">
    <property type="entry name" value="RNase_PH_bact"/>
    <property type="match status" value="1"/>
</dbReference>
<dbReference type="FunFam" id="3.30.230.70:FF:000003">
    <property type="entry name" value="Ribonuclease PH"/>
    <property type="match status" value="1"/>
</dbReference>
<dbReference type="Gene3D" id="3.30.230.70">
    <property type="entry name" value="GHMP Kinase, N-terminal domain"/>
    <property type="match status" value="1"/>
</dbReference>
<dbReference type="HAMAP" id="MF_00564">
    <property type="entry name" value="RNase_PH"/>
    <property type="match status" value="1"/>
</dbReference>
<dbReference type="InterPro" id="IPR001247">
    <property type="entry name" value="ExoRNase_PH_dom1"/>
</dbReference>
<dbReference type="InterPro" id="IPR015847">
    <property type="entry name" value="ExoRNase_PH_dom2"/>
</dbReference>
<dbReference type="InterPro" id="IPR036345">
    <property type="entry name" value="ExoRNase_PH_dom2_sf"/>
</dbReference>
<dbReference type="InterPro" id="IPR027408">
    <property type="entry name" value="PNPase/RNase_PH_dom_sf"/>
</dbReference>
<dbReference type="InterPro" id="IPR020568">
    <property type="entry name" value="Ribosomal_Su5_D2-typ_SF"/>
</dbReference>
<dbReference type="InterPro" id="IPR050080">
    <property type="entry name" value="RNase_PH"/>
</dbReference>
<dbReference type="InterPro" id="IPR002381">
    <property type="entry name" value="RNase_PH_bac-type"/>
</dbReference>
<dbReference type="InterPro" id="IPR018336">
    <property type="entry name" value="RNase_PH_CS"/>
</dbReference>
<dbReference type="NCBIfam" id="TIGR01966">
    <property type="entry name" value="RNasePH"/>
    <property type="match status" value="1"/>
</dbReference>
<dbReference type="PANTHER" id="PTHR11953">
    <property type="entry name" value="EXOSOME COMPLEX COMPONENT"/>
    <property type="match status" value="1"/>
</dbReference>
<dbReference type="PANTHER" id="PTHR11953:SF0">
    <property type="entry name" value="EXOSOME COMPLEX COMPONENT RRP41"/>
    <property type="match status" value="1"/>
</dbReference>
<dbReference type="Pfam" id="PF01138">
    <property type="entry name" value="RNase_PH"/>
    <property type="match status" value="1"/>
</dbReference>
<dbReference type="Pfam" id="PF03725">
    <property type="entry name" value="RNase_PH_C"/>
    <property type="match status" value="1"/>
</dbReference>
<dbReference type="SUPFAM" id="SSF55666">
    <property type="entry name" value="Ribonuclease PH domain 2-like"/>
    <property type="match status" value="1"/>
</dbReference>
<dbReference type="SUPFAM" id="SSF54211">
    <property type="entry name" value="Ribosomal protein S5 domain 2-like"/>
    <property type="match status" value="1"/>
</dbReference>
<dbReference type="PROSITE" id="PS01277">
    <property type="entry name" value="RIBONUCLEASE_PH"/>
    <property type="match status" value="1"/>
</dbReference>
<proteinExistence type="inferred from homology"/>
<evidence type="ECO:0000255" key="1">
    <source>
        <dbReference type="HAMAP-Rule" id="MF_00564"/>
    </source>
</evidence>
<evidence type="ECO:0000256" key="2">
    <source>
        <dbReference type="SAM" id="MobiDB-lite"/>
    </source>
</evidence>
<keyword id="KW-0548">Nucleotidyltransferase</keyword>
<keyword id="KW-0694">RNA-binding</keyword>
<keyword id="KW-0698">rRNA processing</keyword>
<keyword id="KW-0808">Transferase</keyword>
<keyword id="KW-0819">tRNA processing</keyword>
<keyword id="KW-0820">tRNA-binding</keyword>
<protein>
    <recommendedName>
        <fullName evidence="1">Ribonuclease PH</fullName>
        <shortName evidence="1">RNase PH</shortName>
        <ecNumber evidence="1">2.7.7.56</ecNumber>
    </recommendedName>
    <alternativeName>
        <fullName evidence="1">tRNA nucleotidyltransferase</fullName>
    </alternativeName>
</protein>
<gene>
    <name evidence="1" type="primary">rph</name>
    <name type="ordered locus">Rpic_2280</name>
</gene>
<comment type="function">
    <text evidence="1">Phosphorolytic 3'-5' exoribonuclease that plays an important role in tRNA 3'-end maturation. Removes nucleotide residues following the 3'-CCA terminus of tRNAs; can also add nucleotides to the ends of RNA molecules by using nucleoside diphosphates as substrates, but this may not be physiologically important. Probably plays a role in initiation of 16S rRNA degradation (leading to ribosome degradation) during starvation.</text>
</comment>
<comment type="catalytic activity">
    <reaction evidence="1">
        <text>tRNA(n+1) + phosphate = tRNA(n) + a ribonucleoside 5'-diphosphate</text>
        <dbReference type="Rhea" id="RHEA:10628"/>
        <dbReference type="Rhea" id="RHEA-COMP:17343"/>
        <dbReference type="Rhea" id="RHEA-COMP:17344"/>
        <dbReference type="ChEBI" id="CHEBI:43474"/>
        <dbReference type="ChEBI" id="CHEBI:57930"/>
        <dbReference type="ChEBI" id="CHEBI:173114"/>
        <dbReference type="EC" id="2.7.7.56"/>
    </reaction>
</comment>
<comment type="subunit">
    <text evidence="1">Homohexameric ring arranged as a trimer of dimers.</text>
</comment>
<comment type="similarity">
    <text evidence="1">Belongs to the RNase PH family.</text>
</comment>
<sequence>MRPSGRQPDQLRPVTLTRKFTRHAEGSVLVCFGDTQVLCTASVLPKVPPHKKGSGEGWVTAEYGMLPRSTHTRSDREAARGKQSGRTQEIQRLIGRAMRTVFDLRALGEHTLHLDCDVLQADGGTRTASITGAFVAAYDAVSVMREKGQLVGDPVRDFVAAVSVGVVDGVPVLDLDYPEDSACDTDMNVVMTGSGGFVEVQGTAEGTPFSRAEMDAMLGLADQGIRTLISLQKQALGL</sequence>
<organism>
    <name type="scientific">Ralstonia pickettii (strain 12J)</name>
    <dbReference type="NCBI Taxonomy" id="402626"/>
    <lineage>
        <taxon>Bacteria</taxon>
        <taxon>Pseudomonadati</taxon>
        <taxon>Pseudomonadota</taxon>
        <taxon>Betaproteobacteria</taxon>
        <taxon>Burkholderiales</taxon>
        <taxon>Burkholderiaceae</taxon>
        <taxon>Ralstonia</taxon>
    </lineage>
</organism>
<feature type="chain" id="PRO_1000129361" description="Ribonuclease PH">
    <location>
        <begin position="1"/>
        <end position="238"/>
    </location>
</feature>
<feature type="region of interest" description="Disordered" evidence="2">
    <location>
        <begin position="66"/>
        <end position="88"/>
    </location>
</feature>
<feature type="binding site" evidence="1">
    <location>
        <position position="86"/>
    </location>
    <ligand>
        <name>phosphate</name>
        <dbReference type="ChEBI" id="CHEBI:43474"/>
        <note>substrate</note>
    </ligand>
</feature>
<feature type="binding site" evidence="1">
    <location>
        <begin position="124"/>
        <end position="126"/>
    </location>
    <ligand>
        <name>phosphate</name>
        <dbReference type="ChEBI" id="CHEBI:43474"/>
        <note>substrate</note>
    </ligand>
</feature>
<accession>B2U8D8</accession>
<name>RNPH_RALPJ</name>
<reference key="1">
    <citation type="submission" date="2008-05" db="EMBL/GenBank/DDBJ databases">
        <title>Complete sequence of chromosome 1 of Ralstonia pickettii 12J.</title>
        <authorList>
            <person name="Lucas S."/>
            <person name="Copeland A."/>
            <person name="Lapidus A."/>
            <person name="Glavina del Rio T."/>
            <person name="Dalin E."/>
            <person name="Tice H."/>
            <person name="Bruce D."/>
            <person name="Goodwin L."/>
            <person name="Pitluck S."/>
            <person name="Meincke L."/>
            <person name="Brettin T."/>
            <person name="Detter J.C."/>
            <person name="Han C."/>
            <person name="Kuske C.R."/>
            <person name="Schmutz J."/>
            <person name="Larimer F."/>
            <person name="Land M."/>
            <person name="Hauser L."/>
            <person name="Kyrpides N."/>
            <person name="Mikhailova N."/>
            <person name="Marsh T."/>
            <person name="Richardson P."/>
        </authorList>
    </citation>
    <scope>NUCLEOTIDE SEQUENCE [LARGE SCALE GENOMIC DNA]</scope>
    <source>
        <strain>12J</strain>
    </source>
</reference>